<organism>
    <name type="scientific">Macrococcus caseolyticus (strain JCSC5402)</name>
    <name type="common">Macrococcoides caseolyticum</name>
    <dbReference type="NCBI Taxonomy" id="458233"/>
    <lineage>
        <taxon>Bacteria</taxon>
        <taxon>Bacillati</taxon>
        <taxon>Bacillota</taxon>
        <taxon>Bacilli</taxon>
        <taxon>Bacillales</taxon>
        <taxon>Staphylococcaceae</taxon>
        <taxon>Macrococcoides</taxon>
    </lineage>
</organism>
<dbReference type="EMBL" id="AP009484">
    <property type="protein sequence ID" value="BAH17225.1"/>
    <property type="molecule type" value="Genomic_DNA"/>
</dbReference>
<dbReference type="RefSeq" id="WP_012656426.1">
    <property type="nucleotide sequence ID" value="NC_011999.1"/>
</dbReference>
<dbReference type="SMR" id="B9EAG4"/>
<dbReference type="STRING" id="458233.MCCL_0518"/>
<dbReference type="GeneID" id="61129682"/>
<dbReference type="KEGG" id="mcl:MCCL_0518"/>
<dbReference type="eggNOG" id="COG1481">
    <property type="taxonomic scope" value="Bacteria"/>
</dbReference>
<dbReference type="HOGENOM" id="CLU_053282_0_0_9"/>
<dbReference type="OrthoDB" id="401278at2"/>
<dbReference type="Proteomes" id="UP000001383">
    <property type="component" value="Chromosome"/>
</dbReference>
<dbReference type="GO" id="GO:0003677">
    <property type="term" value="F:DNA binding"/>
    <property type="evidence" value="ECO:0007669"/>
    <property type="project" value="UniProtKB-UniRule"/>
</dbReference>
<dbReference type="GO" id="GO:0051301">
    <property type="term" value="P:cell division"/>
    <property type="evidence" value="ECO:0007669"/>
    <property type="project" value="UniProtKB-UniRule"/>
</dbReference>
<dbReference type="GO" id="GO:0043937">
    <property type="term" value="P:regulation of sporulation"/>
    <property type="evidence" value="ECO:0007669"/>
    <property type="project" value="InterPro"/>
</dbReference>
<dbReference type="FunFam" id="3.10.28.10:FF:000002">
    <property type="entry name" value="Probable cell division protein WhiA"/>
    <property type="match status" value="1"/>
</dbReference>
<dbReference type="Gene3D" id="3.10.28.10">
    <property type="entry name" value="Homing endonucleases"/>
    <property type="match status" value="1"/>
</dbReference>
<dbReference type="HAMAP" id="MF_01420">
    <property type="entry name" value="HTH_type_WhiA"/>
    <property type="match status" value="1"/>
</dbReference>
<dbReference type="InterPro" id="IPR027434">
    <property type="entry name" value="Homing_endonucl"/>
</dbReference>
<dbReference type="InterPro" id="IPR018478">
    <property type="entry name" value="Sporu_reg_WhiA_N_dom"/>
</dbReference>
<dbReference type="InterPro" id="IPR003802">
    <property type="entry name" value="Sporulation_regulator_WhiA"/>
</dbReference>
<dbReference type="InterPro" id="IPR023054">
    <property type="entry name" value="Sporulation_regulator_WhiA_C"/>
</dbReference>
<dbReference type="InterPro" id="IPR039518">
    <property type="entry name" value="WhiA_LAGLIDADG_dom"/>
</dbReference>
<dbReference type="NCBIfam" id="TIGR00647">
    <property type="entry name" value="DNA_bind_WhiA"/>
    <property type="match status" value="1"/>
</dbReference>
<dbReference type="PANTHER" id="PTHR37307">
    <property type="entry name" value="CELL DIVISION PROTEIN WHIA-RELATED"/>
    <property type="match status" value="1"/>
</dbReference>
<dbReference type="PANTHER" id="PTHR37307:SF1">
    <property type="entry name" value="CELL DIVISION PROTEIN WHIA-RELATED"/>
    <property type="match status" value="1"/>
</dbReference>
<dbReference type="Pfam" id="PF02650">
    <property type="entry name" value="HTH_WhiA"/>
    <property type="match status" value="1"/>
</dbReference>
<dbReference type="Pfam" id="PF14527">
    <property type="entry name" value="LAGLIDADG_WhiA"/>
    <property type="match status" value="1"/>
</dbReference>
<dbReference type="Pfam" id="PF10298">
    <property type="entry name" value="WhiA_N"/>
    <property type="match status" value="1"/>
</dbReference>
<dbReference type="SUPFAM" id="SSF55608">
    <property type="entry name" value="Homing endonucleases"/>
    <property type="match status" value="1"/>
</dbReference>
<evidence type="ECO:0000255" key="1">
    <source>
        <dbReference type="HAMAP-Rule" id="MF_01420"/>
    </source>
</evidence>
<feature type="chain" id="PRO_1000184856" description="Probable cell division protein WhiA">
    <location>
        <begin position="1"/>
        <end position="316"/>
    </location>
</feature>
<feature type="DNA-binding region" description="H-T-H motif" evidence="1">
    <location>
        <begin position="274"/>
        <end position="308"/>
    </location>
</feature>
<sequence length="316" mass="36200">MSFASEMKNELTRIETDLCCSKAELAALIRMNGNLNIQNMQWVINVQSENAAIARRVYSLTKKIFGVDIELLVRKKMKLKKNNVYICRIKMKTKEILDELSILQDGQFVQHIDQSLIKEECCKRSYLRGAFLAGGSVNNPETSSYHLEIFSLYESHSEGLTEMMNGYGLNAKTLERKKGYISYLKEAEKISDFLSIIGGYQALLKFEDVRIVRDMRNSVNRLVNCETANLNKTIGAAMRQVENIRLIDEEIGIDELPERLREIARLRVQHQDISLKELGEMVSTGVISKSGVNHRLRKIDEIAEKLRNGEHIELKK</sequence>
<accession>B9EAG4</accession>
<gene>
    <name evidence="1" type="primary">whiA</name>
    <name type="ordered locus">MCCL_0518</name>
</gene>
<reference key="1">
    <citation type="journal article" date="2009" name="J. Bacteriol.">
        <title>Complete genome sequence of Macrococcus caseolyticus strain JCSCS5402, reflecting the ancestral genome of the human-pathogenic staphylococci.</title>
        <authorList>
            <person name="Baba T."/>
            <person name="Kuwahara-Arai K."/>
            <person name="Uchiyama I."/>
            <person name="Takeuchi F."/>
            <person name="Ito T."/>
            <person name="Hiramatsu K."/>
        </authorList>
    </citation>
    <scope>NUCLEOTIDE SEQUENCE [LARGE SCALE GENOMIC DNA]</scope>
    <source>
        <strain>JCSC5402</strain>
    </source>
</reference>
<proteinExistence type="inferred from homology"/>
<name>WHIA_MACCJ</name>
<protein>
    <recommendedName>
        <fullName evidence="1">Probable cell division protein WhiA</fullName>
    </recommendedName>
</protein>
<comment type="function">
    <text evidence="1">Involved in cell division and chromosome segregation.</text>
</comment>
<comment type="similarity">
    <text evidence="1">Belongs to the WhiA family.</text>
</comment>
<keyword id="KW-0131">Cell cycle</keyword>
<keyword id="KW-0132">Cell division</keyword>
<keyword id="KW-0238">DNA-binding</keyword>
<keyword id="KW-1185">Reference proteome</keyword>